<reference key="1">
    <citation type="journal article" date="1985" name="J. Virol.">
        <title>Identification and predicted sequence of a previously unrecognized small hydrophobic protein, SH, of the paramyxovirus simian virus 5.</title>
        <authorList>
            <person name="Hiebert S.W."/>
            <person name="Paterson R.G."/>
            <person name="Lamb R.A."/>
        </authorList>
    </citation>
    <scope>NUCLEOTIDE SEQUENCE [GENOMIC RNA]</scope>
</reference>
<reference key="2">
    <citation type="journal article" date="1988" name="J. Virol.">
        <title>Cell surface expression and orientation in membranes of the 44-amino-acid SH protein of simian virus 5.</title>
        <authorList>
            <person name="Hiebert S.W."/>
            <person name="Richardson C.D."/>
            <person name="Lamb R.A."/>
        </authorList>
    </citation>
    <scope>SUBCELLULAR LOCATION</scope>
</reference>
<reference key="3">
    <citation type="journal article" date="2001" name="J. Virol.">
        <title>The SH integral membrane protein of the paramyxovirus simian virus 5 is required to block apoptosis in MDBK cells.</title>
        <authorList>
            <person name="He B."/>
            <person name="Lin G.Y."/>
            <person name="Durbin J.E."/>
            <person name="Durbin R.K."/>
            <person name="Lamb R.A."/>
        </authorList>
    </citation>
    <scope>FUNCTION</scope>
</reference>
<keyword id="KW-1032">Host cell membrane</keyword>
<keyword id="KW-1043">Host membrane</keyword>
<keyword id="KW-0472">Membrane</keyword>
<keyword id="KW-1185">Reference proteome</keyword>
<keyword id="KW-0735">Signal-anchor</keyword>
<keyword id="KW-0812">Transmembrane</keyword>
<keyword id="KW-1133">Transmembrane helix</keyword>
<keyword id="KW-0946">Virion</keyword>
<evidence type="ECO:0000255" key="1"/>
<evidence type="ECO:0000269" key="2">
    <source>
    </source>
</evidence>
<evidence type="ECO:0000305" key="3"/>
<organism>
    <name type="scientific">Parainfluenza virus 5 (strain W3)</name>
    <name type="common">PIV5</name>
    <name type="synonym">Simian virus 5</name>
    <dbReference type="NCBI Taxonomy" id="11208"/>
    <lineage>
        <taxon>Viruses</taxon>
        <taxon>Riboviria</taxon>
        <taxon>Orthornavirae</taxon>
        <taxon>Negarnaviricota</taxon>
        <taxon>Haploviricotina</taxon>
        <taxon>Monjiviricetes</taxon>
        <taxon>Mononegavirales</taxon>
        <taxon>Paramyxoviridae</taxon>
        <taxon>Rubulavirinae</taxon>
        <taxon>Orthorubulavirus</taxon>
        <taxon>Orthorubulavirus mammalis</taxon>
        <taxon>Mammalian orthorubulavirus 5</taxon>
    </lineage>
</organism>
<organismHost>
    <name type="scientific">Canis lupus familiaris</name>
    <name type="common">Dog</name>
    <name type="synonym">Canis familiaris</name>
    <dbReference type="NCBI Taxonomy" id="9615"/>
</organismHost>
<organismHost>
    <name type="scientific">Homo sapiens</name>
    <name type="common">Human</name>
    <dbReference type="NCBI Taxonomy" id="9606"/>
</organismHost>
<gene>
    <name type="primary">SH</name>
</gene>
<comment type="function">
    <text evidence="2">Inhibits TNF-alpha signaling and seems to block apoptosis in host infected cells.</text>
</comment>
<comment type="subcellular location">
    <subcellularLocation>
        <location evidence="3">Virion membrane</location>
        <topology evidence="3">Single-pass type II membrane protein</topology>
    </subcellularLocation>
    <subcellularLocation>
        <location evidence="3">Host cell membrane</location>
        <topology evidence="3">Single-pass type II membrane protein</topology>
    </subcellularLocation>
</comment>
<comment type="similarity">
    <text evidence="3">Belongs to the rubulavirus small hydrophobic protein family.</text>
</comment>
<accession>P07577</accession>
<name>SH_PIV5</name>
<dbReference type="EMBL" id="M11785">
    <property type="protein sequence ID" value="AAA47883.1"/>
    <property type="molecule type" value="Genomic_RNA"/>
</dbReference>
<dbReference type="EMBL" id="AF052755">
    <property type="protein sequence ID" value="AAC95516.1"/>
    <property type="molecule type" value="Genomic_RNA"/>
</dbReference>
<dbReference type="PIR" id="A25482">
    <property type="entry name" value="SHNZS5"/>
</dbReference>
<dbReference type="SMR" id="P07577"/>
<dbReference type="TCDB" id="1.A.103.1.1">
    <property type="family name" value="the simian virus 5 (parainfluenza virus 5) sh (sv5-sh) family"/>
</dbReference>
<dbReference type="KEGG" id="vg:3160797"/>
<dbReference type="Proteomes" id="UP000007232">
    <property type="component" value="Segment"/>
</dbReference>
<dbReference type="GO" id="GO:0020002">
    <property type="term" value="C:host cell plasma membrane"/>
    <property type="evidence" value="ECO:0007669"/>
    <property type="project" value="UniProtKB-SubCell"/>
</dbReference>
<dbReference type="GO" id="GO:0016020">
    <property type="term" value="C:membrane"/>
    <property type="evidence" value="ECO:0007669"/>
    <property type="project" value="UniProtKB-KW"/>
</dbReference>
<dbReference type="GO" id="GO:0055036">
    <property type="term" value="C:virion membrane"/>
    <property type="evidence" value="ECO:0007669"/>
    <property type="project" value="UniProtKB-SubCell"/>
</dbReference>
<protein>
    <recommendedName>
        <fullName>Small hydrophobic protein</fullName>
    </recommendedName>
</protein>
<feature type="chain" id="PRO_0000142886" description="Small hydrophobic protein">
    <location>
        <begin position="1"/>
        <end position="44"/>
    </location>
</feature>
<feature type="topological domain" description="Intravirion" evidence="1">
    <location>
        <begin position="1"/>
        <end position="16"/>
    </location>
</feature>
<feature type="transmembrane region" description="Helical; Signal-anchor for type II membrane protein" evidence="1">
    <location>
        <begin position="17"/>
        <end position="37"/>
    </location>
</feature>
<feature type="topological domain" description="Virion surface" evidence="1">
    <location>
        <begin position="38"/>
        <end position="44"/>
    </location>
</feature>
<sequence>MLPDPEDPESKKATRRAGNLIICFLFIFFLFVTFIVPTLRHLLS</sequence>
<proteinExistence type="inferred from homology"/>